<dbReference type="EC" id="2.1.2.3" evidence="1"/>
<dbReference type="EC" id="3.5.4.10" evidence="1"/>
<dbReference type="EMBL" id="AE000657">
    <property type="protein sequence ID" value="AAC07734.1"/>
    <property type="molecule type" value="Genomic_DNA"/>
</dbReference>
<dbReference type="PIR" id="C70468">
    <property type="entry name" value="C70468"/>
</dbReference>
<dbReference type="RefSeq" id="NP_214344.1">
    <property type="nucleotide sequence ID" value="NC_000918.1"/>
</dbReference>
<dbReference type="RefSeq" id="WP_010881280.1">
    <property type="nucleotide sequence ID" value="NC_000918.1"/>
</dbReference>
<dbReference type="SMR" id="O67775"/>
<dbReference type="FunCoup" id="O67775">
    <property type="interactions" value="420"/>
</dbReference>
<dbReference type="STRING" id="224324.aq_1963"/>
<dbReference type="EnsemblBacteria" id="AAC07734">
    <property type="protein sequence ID" value="AAC07734"/>
    <property type="gene ID" value="aq_1963"/>
</dbReference>
<dbReference type="KEGG" id="aae:aq_1963"/>
<dbReference type="PATRIC" id="fig|224324.8.peg.1514"/>
<dbReference type="eggNOG" id="COG0138">
    <property type="taxonomic scope" value="Bacteria"/>
</dbReference>
<dbReference type="HOGENOM" id="CLU_016316_5_2_0"/>
<dbReference type="InParanoid" id="O67775"/>
<dbReference type="OrthoDB" id="9802065at2"/>
<dbReference type="UniPathway" id="UPA00074">
    <property type="reaction ID" value="UER00133"/>
</dbReference>
<dbReference type="UniPathway" id="UPA00074">
    <property type="reaction ID" value="UER00135"/>
</dbReference>
<dbReference type="Proteomes" id="UP000000798">
    <property type="component" value="Chromosome"/>
</dbReference>
<dbReference type="GO" id="GO:0005829">
    <property type="term" value="C:cytosol"/>
    <property type="evidence" value="ECO:0000318"/>
    <property type="project" value="GO_Central"/>
</dbReference>
<dbReference type="GO" id="GO:0003937">
    <property type="term" value="F:IMP cyclohydrolase activity"/>
    <property type="evidence" value="ECO:0000318"/>
    <property type="project" value="GO_Central"/>
</dbReference>
<dbReference type="GO" id="GO:0004643">
    <property type="term" value="F:phosphoribosylaminoimidazolecarboxamide formyltransferase activity"/>
    <property type="evidence" value="ECO:0000318"/>
    <property type="project" value="GO_Central"/>
</dbReference>
<dbReference type="GO" id="GO:0006189">
    <property type="term" value="P:'de novo' IMP biosynthetic process"/>
    <property type="evidence" value="ECO:0000318"/>
    <property type="project" value="GO_Central"/>
</dbReference>
<dbReference type="CDD" id="cd01421">
    <property type="entry name" value="IMPCH"/>
    <property type="match status" value="1"/>
</dbReference>
<dbReference type="FunFam" id="3.40.140.20:FF:000001">
    <property type="entry name" value="Bifunctional purine biosynthesis protein PurH"/>
    <property type="match status" value="1"/>
</dbReference>
<dbReference type="FunFam" id="3.40.140.20:FF:000002">
    <property type="entry name" value="Bifunctional purine biosynthesis protein PurH"/>
    <property type="match status" value="1"/>
</dbReference>
<dbReference type="FunFam" id="3.40.50.1380:FF:000001">
    <property type="entry name" value="Bifunctional purine biosynthesis protein PurH"/>
    <property type="match status" value="1"/>
</dbReference>
<dbReference type="Gene3D" id="3.40.140.20">
    <property type="match status" value="2"/>
</dbReference>
<dbReference type="Gene3D" id="3.40.50.1380">
    <property type="entry name" value="Methylglyoxal synthase-like domain"/>
    <property type="match status" value="1"/>
</dbReference>
<dbReference type="HAMAP" id="MF_00139">
    <property type="entry name" value="PurH"/>
    <property type="match status" value="1"/>
</dbReference>
<dbReference type="InterPro" id="IPR024051">
    <property type="entry name" value="AICAR_Tfase_dup_dom_sf"/>
</dbReference>
<dbReference type="InterPro" id="IPR016193">
    <property type="entry name" value="Cytidine_deaminase-like"/>
</dbReference>
<dbReference type="InterPro" id="IPR011607">
    <property type="entry name" value="MGS-like_dom"/>
</dbReference>
<dbReference type="InterPro" id="IPR036914">
    <property type="entry name" value="MGS-like_dom_sf"/>
</dbReference>
<dbReference type="InterPro" id="IPR002695">
    <property type="entry name" value="PurH-like"/>
</dbReference>
<dbReference type="NCBIfam" id="NF002049">
    <property type="entry name" value="PRK00881.1"/>
    <property type="match status" value="1"/>
</dbReference>
<dbReference type="NCBIfam" id="TIGR00355">
    <property type="entry name" value="purH"/>
    <property type="match status" value="1"/>
</dbReference>
<dbReference type="PANTHER" id="PTHR11692:SF0">
    <property type="entry name" value="BIFUNCTIONAL PURINE BIOSYNTHESIS PROTEIN ATIC"/>
    <property type="match status" value="1"/>
</dbReference>
<dbReference type="PANTHER" id="PTHR11692">
    <property type="entry name" value="BIFUNCTIONAL PURINE BIOSYNTHESIS PROTEIN PURH"/>
    <property type="match status" value="1"/>
</dbReference>
<dbReference type="Pfam" id="PF01808">
    <property type="entry name" value="AICARFT_IMPCHas"/>
    <property type="match status" value="1"/>
</dbReference>
<dbReference type="Pfam" id="PF02142">
    <property type="entry name" value="MGS"/>
    <property type="match status" value="1"/>
</dbReference>
<dbReference type="PIRSF" id="PIRSF000414">
    <property type="entry name" value="AICARFT_IMPCHas"/>
    <property type="match status" value="1"/>
</dbReference>
<dbReference type="SMART" id="SM00798">
    <property type="entry name" value="AICARFT_IMPCHas"/>
    <property type="match status" value="1"/>
</dbReference>
<dbReference type="SMART" id="SM00851">
    <property type="entry name" value="MGS"/>
    <property type="match status" value="1"/>
</dbReference>
<dbReference type="SUPFAM" id="SSF53927">
    <property type="entry name" value="Cytidine deaminase-like"/>
    <property type="match status" value="1"/>
</dbReference>
<dbReference type="SUPFAM" id="SSF52335">
    <property type="entry name" value="Methylglyoxal synthase-like"/>
    <property type="match status" value="1"/>
</dbReference>
<dbReference type="PROSITE" id="PS51855">
    <property type="entry name" value="MGS"/>
    <property type="match status" value="1"/>
</dbReference>
<evidence type="ECO:0000255" key="1">
    <source>
        <dbReference type="HAMAP-Rule" id="MF_00139"/>
    </source>
</evidence>
<evidence type="ECO:0000255" key="2">
    <source>
        <dbReference type="PROSITE-ProRule" id="PRU01202"/>
    </source>
</evidence>
<evidence type="ECO:0000305" key="3"/>
<sequence length="506" mass="56677">MRAIISVYRKEGIDKLAKALQELGYEIVSTGGTAKYLREKGISVKEVSEITGFPEILEGRVKTLHPVVHGGILFRDWVEKDKEEIEKHGIKPIDVVVVNLYPFEEKLKEGLTDKDLMEFIDIGGPTLIRAAAKNFFRVVILVDPEDYDWVIEKLKKGNLTLQDRAYLAWKAFSHTAYYDGVISQAFKKLYSIDTFGKEEALPLKRMQKLRYGENPHQRGFLYENPLEDIGITKAQVLQGKEMSFNNYLDADSAVRLVAEFPNQTVCAIIKHNNPCGVALGSSVKEAFLRAKEADPVSAFGGIVAFNDKVDGETAKELTSMFLEVVIAPDYDEEALRELSRKKNLRVIRFFGFQHAFDVKKVSGGYLLQDEDTVLYEKLQVVTKREPTAEEMEDLLFAWKVVKHTKSNAVVIAKNGQTLGIGSGNVSRVDSLKCAINKAKEFGFDLKGAVVASEAFFPFRDSIDIMAKEGITAVIQPGGSIRDQEVIDACNEHGIAMIFTGLRHFKH</sequence>
<name>PUR9_AQUAE</name>
<gene>
    <name evidence="1" type="primary">purH</name>
    <name type="ordered locus">aq_1963</name>
</gene>
<organism>
    <name type="scientific">Aquifex aeolicus (strain VF5)</name>
    <dbReference type="NCBI Taxonomy" id="224324"/>
    <lineage>
        <taxon>Bacteria</taxon>
        <taxon>Pseudomonadati</taxon>
        <taxon>Aquificota</taxon>
        <taxon>Aquificia</taxon>
        <taxon>Aquificales</taxon>
        <taxon>Aquificaceae</taxon>
        <taxon>Aquifex</taxon>
    </lineage>
</organism>
<reference key="1">
    <citation type="journal article" date="1998" name="Nature">
        <title>The complete genome of the hyperthermophilic bacterium Aquifex aeolicus.</title>
        <authorList>
            <person name="Deckert G."/>
            <person name="Warren P.V."/>
            <person name="Gaasterland T."/>
            <person name="Young W.G."/>
            <person name="Lenox A.L."/>
            <person name="Graham D.E."/>
            <person name="Overbeek R."/>
            <person name="Snead M.A."/>
            <person name="Keller M."/>
            <person name="Aujay M."/>
            <person name="Huber R."/>
            <person name="Feldman R.A."/>
            <person name="Short J.M."/>
            <person name="Olsen G.J."/>
            <person name="Swanson R.V."/>
        </authorList>
    </citation>
    <scope>NUCLEOTIDE SEQUENCE [LARGE SCALE GENOMIC DNA]</scope>
    <source>
        <strain>VF5</strain>
    </source>
</reference>
<keyword id="KW-0378">Hydrolase</keyword>
<keyword id="KW-0511">Multifunctional enzyme</keyword>
<keyword id="KW-0658">Purine biosynthesis</keyword>
<keyword id="KW-1185">Reference proteome</keyword>
<keyword id="KW-0808">Transferase</keyword>
<accession>O67775</accession>
<feature type="chain" id="PRO_0000192068" description="Bifunctional purine biosynthesis protein PurH">
    <location>
        <begin position="1"/>
        <end position="506"/>
    </location>
</feature>
<feature type="domain" description="MGS-like" evidence="2">
    <location>
        <begin position="1"/>
        <end position="142"/>
    </location>
</feature>
<comment type="catalytic activity">
    <reaction evidence="1">
        <text>(6R)-10-formyltetrahydrofolate + 5-amino-1-(5-phospho-beta-D-ribosyl)imidazole-4-carboxamide = 5-formamido-1-(5-phospho-D-ribosyl)imidazole-4-carboxamide + (6S)-5,6,7,8-tetrahydrofolate</text>
        <dbReference type="Rhea" id="RHEA:22192"/>
        <dbReference type="ChEBI" id="CHEBI:57453"/>
        <dbReference type="ChEBI" id="CHEBI:58467"/>
        <dbReference type="ChEBI" id="CHEBI:58475"/>
        <dbReference type="ChEBI" id="CHEBI:195366"/>
        <dbReference type="EC" id="2.1.2.3"/>
    </reaction>
</comment>
<comment type="catalytic activity">
    <reaction evidence="1">
        <text>IMP + H2O = 5-formamido-1-(5-phospho-D-ribosyl)imidazole-4-carboxamide</text>
        <dbReference type="Rhea" id="RHEA:18445"/>
        <dbReference type="ChEBI" id="CHEBI:15377"/>
        <dbReference type="ChEBI" id="CHEBI:58053"/>
        <dbReference type="ChEBI" id="CHEBI:58467"/>
        <dbReference type="EC" id="3.5.4.10"/>
    </reaction>
</comment>
<comment type="pathway">
    <text evidence="1">Purine metabolism; IMP biosynthesis via de novo pathway; 5-formamido-1-(5-phospho-D-ribosyl)imidazole-4-carboxamide from 5-amino-1-(5-phospho-D-ribosyl)imidazole-4-carboxamide (10-formyl THF route): step 1/1.</text>
</comment>
<comment type="pathway">
    <text evidence="1">Purine metabolism; IMP biosynthesis via de novo pathway; IMP from 5-formamido-1-(5-phospho-D-ribosyl)imidazole-4-carboxamide: step 1/1.</text>
</comment>
<comment type="domain">
    <text evidence="1">The IMP cyclohydrolase activity resides in the N-terminal region.</text>
</comment>
<comment type="similarity">
    <text evidence="1 3">Belongs to the PurH family.</text>
</comment>
<protein>
    <recommendedName>
        <fullName evidence="1">Bifunctional purine biosynthesis protein PurH</fullName>
    </recommendedName>
    <domain>
        <recommendedName>
            <fullName evidence="1">Phosphoribosylaminoimidazolecarboxamide formyltransferase</fullName>
            <ecNumber evidence="1">2.1.2.3</ecNumber>
        </recommendedName>
        <alternativeName>
            <fullName evidence="1">AICAR transformylase</fullName>
        </alternativeName>
    </domain>
    <domain>
        <recommendedName>
            <fullName evidence="1">IMP cyclohydrolase</fullName>
            <ecNumber evidence="1">3.5.4.10</ecNumber>
        </recommendedName>
        <alternativeName>
            <fullName evidence="1">ATIC</fullName>
        </alternativeName>
        <alternativeName>
            <fullName evidence="1">IMP synthase</fullName>
        </alternativeName>
        <alternativeName>
            <fullName evidence="1">Inosinicase</fullName>
        </alternativeName>
    </domain>
</protein>
<proteinExistence type="inferred from homology"/>